<comment type="similarity">
    <text evidence="1">Belongs to the UPF0102 family.</text>
</comment>
<protein>
    <recommendedName>
        <fullName evidence="1">UPF0102 protein YraN</fullName>
    </recommendedName>
</protein>
<proteinExistence type="inferred from homology"/>
<name>YRAN_SALTY</name>
<keyword id="KW-1185">Reference proteome</keyword>
<evidence type="ECO:0000255" key="1">
    <source>
        <dbReference type="HAMAP-Rule" id="MF_00048"/>
    </source>
</evidence>
<sequence>MAQIPARGDCSRQLTRKQAGDAWEAAARRWLESKGLRFIAANVRERGGEIDLIMRDGKTTVFVEVRYRRSGLYGGAAASVTRSKQHKLLHTARLWLARQNGSFDTVDCRFDVLAFTGNEIEWFRDAFNDHS</sequence>
<dbReference type="EMBL" id="AE006468">
    <property type="protein sequence ID" value="AAL22137.1"/>
    <property type="molecule type" value="Genomic_DNA"/>
</dbReference>
<dbReference type="RefSeq" id="NP_462178.1">
    <property type="nucleotide sequence ID" value="NC_003197.2"/>
</dbReference>
<dbReference type="RefSeq" id="WP_000057285.1">
    <property type="nucleotide sequence ID" value="NC_003197.2"/>
</dbReference>
<dbReference type="SMR" id="Q8ZLU3"/>
<dbReference type="STRING" id="99287.STM3265"/>
<dbReference type="PaxDb" id="99287-STM3265"/>
<dbReference type="GeneID" id="1254788"/>
<dbReference type="KEGG" id="stm:STM3265"/>
<dbReference type="PATRIC" id="fig|99287.12.peg.3464"/>
<dbReference type="HOGENOM" id="CLU_115353_1_0_6"/>
<dbReference type="OMA" id="TVLERNW"/>
<dbReference type="PhylomeDB" id="Q8ZLU3"/>
<dbReference type="BioCyc" id="SENT99287:STM3265-MONOMER"/>
<dbReference type="Proteomes" id="UP000001014">
    <property type="component" value="Chromosome"/>
</dbReference>
<dbReference type="GO" id="GO:0003676">
    <property type="term" value="F:nucleic acid binding"/>
    <property type="evidence" value="ECO:0007669"/>
    <property type="project" value="InterPro"/>
</dbReference>
<dbReference type="CDD" id="cd20736">
    <property type="entry name" value="PoNe_Nuclease"/>
    <property type="match status" value="1"/>
</dbReference>
<dbReference type="Gene3D" id="3.40.1350.10">
    <property type="match status" value="1"/>
</dbReference>
<dbReference type="HAMAP" id="MF_00048">
    <property type="entry name" value="UPF0102"/>
    <property type="match status" value="1"/>
</dbReference>
<dbReference type="InterPro" id="IPR011335">
    <property type="entry name" value="Restrct_endonuc-II-like"/>
</dbReference>
<dbReference type="InterPro" id="IPR011856">
    <property type="entry name" value="tRNA_endonuc-like_dom_sf"/>
</dbReference>
<dbReference type="InterPro" id="IPR003509">
    <property type="entry name" value="UPF0102_YraN-like"/>
</dbReference>
<dbReference type="NCBIfam" id="NF009150">
    <property type="entry name" value="PRK12497.1-3"/>
    <property type="match status" value="1"/>
</dbReference>
<dbReference type="NCBIfam" id="TIGR00252">
    <property type="entry name" value="YraN family protein"/>
    <property type="match status" value="1"/>
</dbReference>
<dbReference type="PANTHER" id="PTHR34039">
    <property type="entry name" value="UPF0102 PROTEIN YRAN"/>
    <property type="match status" value="1"/>
</dbReference>
<dbReference type="PANTHER" id="PTHR34039:SF1">
    <property type="entry name" value="UPF0102 PROTEIN YRAN"/>
    <property type="match status" value="1"/>
</dbReference>
<dbReference type="Pfam" id="PF02021">
    <property type="entry name" value="UPF0102"/>
    <property type="match status" value="1"/>
</dbReference>
<dbReference type="SUPFAM" id="SSF52980">
    <property type="entry name" value="Restriction endonuclease-like"/>
    <property type="match status" value="1"/>
</dbReference>
<feature type="chain" id="PRO_0000167378" description="UPF0102 protein YraN">
    <location>
        <begin position="1"/>
        <end position="131"/>
    </location>
</feature>
<organism>
    <name type="scientific">Salmonella typhimurium (strain LT2 / SGSC1412 / ATCC 700720)</name>
    <dbReference type="NCBI Taxonomy" id="99287"/>
    <lineage>
        <taxon>Bacteria</taxon>
        <taxon>Pseudomonadati</taxon>
        <taxon>Pseudomonadota</taxon>
        <taxon>Gammaproteobacteria</taxon>
        <taxon>Enterobacterales</taxon>
        <taxon>Enterobacteriaceae</taxon>
        <taxon>Salmonella</taxon>
    </lineage>
</organism>
<accession>Q8ZLU3</accession>
<gene>
    <name evidence="1" type="primary">yraN</name>
    <name type="ordered locus">STM3265</name>
</gene>
<reference key="1">
    <citation type="journal article" date="2001" name="Nature">
        <title>Complete genome sequence of Salmonella enterica serovar Typhimurium LT2.</title>
        <authorList>
            <person name="McClelland M."/>
            <person name="Sanderson K.E."/>
            <person name="Spieth J."/>
            <person name="Clifton S.W."/>
            <person name="Latreille P."/>
            <person name="Courtney L."/>
            <person name="Porwollik S."/>
            <person name="Ali J."/>
            <person name="Dante M."/>
            <person name="Du F."/>
            <person name="Hou S."/>
            <person name="Layman D."/>
            <person name="Leonard S."/>
            <person name="Nguyen C."/>
            <person name="Scott K."/>
            <person name="Holmes A."/>
            <person name="Grewal N."/>
            <person name="Mulvaney E."/>
            <person name="Ryan E."/>
            <person name="Sun H."/>
            <person name="Florea L."/>
            <person name="Miller W."/>
            <person name="Stoneking T."/>
            <person name="Nhan M."/>
            <person name="Waterston R."/>
            <person name="Wilson R.K."/>
        </authorList>
    </citation>
    <scope>NUCLEOTIDE SEQUENCE [LARGE SCALE GENOMIC DNA]</scope>
    <source>
        <strain>LT2 / SGSC1412 / ATCC 700720</strain>
    </source>
</reference>